<keyword id="KW-0240">DNA-directed RNA polymerase</keyword>
<keyword id="KW-0548">Nucleotidyltransferase</keyword>
<keyword id="KW-0804">Transcription</keyword>
<keyword id="KW-0808">Transferase</keyword>
<gene>
    <name evidence="1" type="primary">rpoB</name>
    <name type="ordered locus">A1E_00715</name>
</gene>
<comment type="function">
    <text evidence="1">DNA-dependent RNA polymerase catalyzes the transcription of DNA into RNA using the four ribonucleoside triphosphates as substrates.</text>
</comment>
<comment type="catalytic activity">
    <reaction evidence="1">
        <text>RNA(n) + a ribonucleoside 5'-triphosphate = RNA(n+1) + diphosphate</text>
        <dbReference type="Rhea" id="RHEA:21248"/>
        <dbReference type="Rhea" id="RHEA-COMP:14527"/>
        <dbReference type="Rhea" id="RHEA-COMP:17342"/>
        <dbReference type="ChEBI" id="CHEBI:33019"/>
        <dbReference type="ChEBI" id="CHEBI:61557"/>
        <dbReference type="ChEBI" id="CHEBI:140395"/>
        <dbReference type="EC" id="2.7.7.6"/>
    </reaction>
</comment>
<comment type="subunit">
    <text evidence="1">The RNAP catalytic core consists of 2 alpha, 1 beta, 1 beta' and 1 omega subunit. When a sigma factor is associated with the core the holoenzyme is formed, which can initiate transcription.</text>
</comment>
<comment type="similarity">
    <text evidence="1">Belongs to the RNA polymerase beta chain family.</text>
</comment>
<protein>
    <recommendedName>
        <fullName evidence="1">DNA-directed RNA polymerase subunit beta</fullName>
        <shortName evidence="1">RNAP subunit beta</shortName>
        <ecNumber evidence="1">2.7.7.6</ecNumber>
    </recommendedName>
    <alternativeName>
        <fullName evidence="1">RNA polymerase subunit beta</fullName>
    </alternativeName>
    <alternativeName>
        <fullName evidence="1">Transcriptase subunit beta</fullName>
    </alternativeName>
</protein>
<reference key="1">
    <citation type="submission" date="2007-09" db="EMBL/GenBank/DDBJ databases">
        <title>Complete genome sequence of Rickettsia canadensis.</title>
        <authorList>
            <person name="Madan A."/>
            <person name="Fahey J."/>
            <person name="Helton E."/>
            <person name="Ketteman M."/>
            <person name="Madan A."/>
            <person name="Rodrigues S."/>
            <person name="Sanchez A."/>
            <person name="Whiting M."/>
            <person name="Dasch G."/>
            <person name="Eremeeva M."/>
        </authorList>
    </citation>
    <scope>NUCLEOTIDE SEQUENCE [LARGE SCALE GENOMIC DNA]</scope>
    <source>
        <strain>McKiel</strain>
    </source>
</reference>
<proteinExistence type="inferred from homology"/>
<organism>
    <name type="scientific">Rickettsia canadensis (strain McKiel)</name>
    <dbReference type="NCBI Taxonomy" id="293613"/>
    <lineage>
        <taxon>Bacteria</taxon>
        <taxon>Pseudomonadati</taxon>
        <taxon>Pseudomonadota</taxon>
        <taxon>Alphaproteobacteria</taxon>
        <taxon>Rickettsiales</taxon>
        <taxon>Rickettsiaceae</taxon>
        <taxon>Rickettsieae</taxon>
        <taxon>Rickettsia</taxon>
        <taxon>belli group</taxon>
    </lineage>
</organism>
<dbReference type="EC" id="2.7.7.6" evidence="1"/>
<dbReference type="EMBL" id="CP000409">
    <property type="protein sequence ID" value="ABV73091.1"/>
    <property type="molecule type" value="Genomic_DNA"/>
</dbReference>
<dbReference type="RefSeq" id="WP_012148292.1">
    <property type="nucleotide sequence ID" value="NC_009879.1"/>
</dbReference>
<dbReference type="SMR" id="A8EXK8"/>
<dbReference type="STRING" id="293613.A1E_00715"/>
<dbReference type="KEGG" id="rcm:A1E_00715"/>
<dbReference type="eggNOG" id="COG0085">
    <property type="taxonomic scope" value="Bacteria"/>
</dbReference>
<dbReference type="HOGENOM" id="CLU_000524_4_0_5"/>
<dbReference type="Proteomes" id="UP000007056">
    <property type="component" value="Chromosome"/>
</dbReference>
<dbReference type="GO" id="GO:0000428">
    <property type="term" value="C:DNA-directed RNA polymerase complex"/>
    <property type="evidence" value="ECO:0007669"/>
    <property type="project" value="UniProtKB-KW"/>
</dbReference>
<dbReference type="GO" id="GO:0003677">
    <property type="term" value="F:DNA binding"/>
    <property type="evidence" value="ECO:0007669"/>
    <property type="project" value="UniProtKB-UniRule"/>
</dbReference>
<dbReference type="GO" id="GO:0003899">
    <property type="term" value="F:DNA-directed RNA polymerase activity"/>
    <property type="evidence" value="ECO:0007669"/>
    <property type="project" value="UniProtKB-UniRule"/>
</dbReference>
<dbReference type="GO" id="GO:0032549">
    <property type="term" value="F:ribonucleoside binding"/>
    <property type="evidence" value="ECO:0007669"/>
    <property type="project" value="InterPro"/>
</dbReference>
<dbReference type="GO" id="GO:0006351">
    <property type="term" value="P:DNA-templated transcription"/>
    <property type="evidence" value="ECO:0007669"/>
    <property type="project" value="UniProtKB-UniRule"/>
</dbReference>
<dbReference type="CDD" id="cd00653">
    <property type="entry name" value="RNA_pol_B_RPB2"/>
    <property type="match status" value="1"/>
</dbReference>
<dbReference type="Gene3D" id="2.40.50.100">
    <property type="match status" value="1"/>
</dbReference>
<dbReference type="Gene3D" id="2.40.50.150">
    <property type="match status" value="1"/>
</dbReference>
<dbReference type="Gene3D" id="3.90.1100.10">
    <property type="match status" value="2"/>
</dbReference>
<dbReference type="Gene3D" id="2.30.150.10">
    <property type="entry name" value="DNA-directed RNA polymerase, beta subunit, external 1 domain"/>
    <property type="match status" value="1"/>
</dbReference>
<dbReference type="Gene3D" id="2.40.270.10">
    <property type="entry name" value="DNA-directed RNA polymerase, subunit 2, domain 6"/>
    <property type="match status" value="1"/>
</dbReference>
<dbReference type="Gene3D" id="3.90.1800.10">
    <property type="entry name" value="RNA polymerase alpha subunit dimerisation domain"/>
    <property type="match status" value="1"/>
</dbReference>
<dbReference type="HAMAP" id="MF_01321">
    <property type="entry name" value="RNApol_bact_RpoB"/>
    <property type="match status" value="1"/>
</dbReference>
<dbReference type="InterPro" id="IPR042107">
    <property type="entry name" value="DNA-dir_RNA_pol_bsu_ext_1_sf"/>
</dbReference>
<dbReference type="InterPro" id="IPR019462">
    <property type="entry name" value="DNA-dir_RNA_pol_bsu_external_1"/>
</dbReference>
<dbReference type="InterPro" id="IPR015712">
    <property type="entry name" value="DNA-dir_RNA_pol_su2"/>
</dbReference>
<dbReference type="InterPro" id="IPR007120">
    <property type="entry name" value="DNA-dir_RNAP_su2_dom"/>
</dbReference>
<dbReference type="InterPro" id="IPR037033">
    <property type="entry name" value="DNA-dir_RNAP_su2_hyb_sf"/>
</dbReference>
<dbReference type="InterPro" id="IPR010243">
    <property type="entry name" value="RNA_pol_bsu_bac"/>
</dbReference>
<dbReference type="InterPro" id="IPR007121">
    <property type="entry name" value="RNA_pol_bsu_CS"/>
</dbReference>
<dbReference type="InterPro" id="IPR007644">
    <property type="entry name" value="RNA_pol_bsu_protrusion"/>
</dbReference>
<dbReference type="InterPro" id="IPR007642">
    <property type="entry name" value="RNA_pol_Rpb2_2"/>
</dbReference>
<dbReference type="InterPro" id="IPR007645">
    <property type="entry name" value="RNA_pol_Rpb2_3"/>
</dbReference>
<dbReference type="InterPro" id="IPR007641">
    <property type="entry name" value="RNA_pol_Rpb2_7"/>
</dbReference>
<dbReference type="InterPro" id="IPR014724">
    <property type="entry name" value="RNA_pol_RPB2_OB-fold"/>
</dbReference>
<dbReference type="NCBIfam" id="NF001616">
    <property type="entry name" value="PRK00405.1"/>
    <property type="match status" value="1"/>
</dbReference>
<dbReference type="NCBIfam" id="TIGR02013">
    <property type="entry name" value="rpoB"/>
    <property type="match status" value="1"/>
</dbReference>
<dbReference type="PANTHER" id="PTHR20856">
    <property type="entry name" value="DNA-DIRECTED RNA POLYMERASE I SUBUNIT 2"/>
    <property type="match status" value="1"/>
</dbReference>
<dbReference type="Pfam" id="PF04563">
    <property type="entry name" value="RNA_pol_Rpb2_1"/>
    <property type="match status" value="1"/>
</dbReference>
<dbReference type="Pfam" id="PF04561">
    <property type="entry name" value="RNA_pol_Rpb2_2"/>
    <property type="match status" value="2"/>
</dbReference>
<dbReference type="Pfam" id="PF04565">
    <property type="entry name" value="RNA_pol_Rpb2_3"/>
    <property type="match status" value="1"/>
</dbReference>
<dbReference type="Pfam" id="PF10385">
    <property type="entry name" value="RNA_pol_Rpb2_45"/>
    <property type="match status" value="1"/>
</dbReference>
<dbReference type="Pfam" id="PF00562">
    <property type="entry name" value="RNA_pol_Rpb2_6"/>
    <property type="match status" value="1"/>
</dbReference>
<dbReference type="Pfam" id="PF04560">
    <property type="entry name" value="RNA_pol_Rpb2_7"/>
    <property type="match status" value="1"/>
</dbReference>
<dbReference type="SUPFAM" id="SSF64484">
    <property type="entry name" value="beta and beta-prime subunits of DNA dependent RNA-polymerase"/>
    <property type="match status" value="1"/>
</dbReference>
<dbReference type="PROSITE" id="PS01166">
    <property type="entry name" value="RNA_POL_BETA"/>
    <property type="match status" value="1"/>
</dbReference>
<name>RPOB_RICCK</name>
<evidence type="ECO:0000255" key="1">
    <source>
        <dbReference type="HAMAP-Rule" id="MF_01321"/>
    </source>
</evidence>
<sequence length="1373" mass="154183">MVLLRDNIEVQPLSNNRRIRKNFGHINLVADIPNLIEIQKNSYEKNFLQLNIKDSERKNKGLQSILNSIFPISDSSNIANLEFVKYEFDTPKYDVEECSQRSLSYAAPLKVTLRLSIWDIDEDTGTREIKGIKEQEVYMGDIPLMTKNGTFIINGTERVVVSQMHRSPGVFFYHDEGKIHSSGKLLYSARVIPYRGSWLDLEFDAKDIIYFRIDRKRKLYATTLLRAIGMSTEEIIKFYYNSVTYKLVQNKGWAVKFMPGHITAHRLTSDLVDADTGNVLLKAGQKITPRLAQKYFREGLNNVLVARETLIGKYLSEDLRDPVSDEILAKIGEMITADMLNVINDLKIKNVNVLVVNPQSGPYIRNTLFADKNQDRETALCDIFRVLRPGEPANIEAAEGLFYNLFFDAERYDLSEVGRIKMNSRLELNISEEVTVLTIDDIKNIVRVLVELKDGKGIIDDIDHLGNRRVRSVGELIENQFRIGLVRMEKSVIERMSAGDVDTLMPHDLVNSKILVSVVKEFFSTSQLSQFMDQTNPLSEITHKRRLSALGPGGLSRDRAGFEVRDVHPTHYGRICPIETPEGQNIGLINSMATYARINKHGFIESPYRRVKDGRVTDEVVYLSAIEEGKYKIGQANSKVDKDGVLQGEFINCRVEGGNFVMVEPHEVDFIDVTPMQVVSVAASLIPFLENDDANRALMGSNMQRQAVPLIKTDAPFVGTGVEGVVAKDSGASVLALHDGIVEQVDSNRIVIRTLAQKADGSPSVDIYNLLKFQKSNHNTCINQKPLVKVGHYVKKNDIIADGPSTDNGEIALGRNVLVAFLPWNGYNFEDSILISERIVKEDIFTSIHIEEFEVIARDTRLGPEEITRDIPNVSEEALSHLDEVGIIYVGAEVKAGDILVGKVTPKSESPITPEEKLLRAIFGEKAFDVKDSSLHVPSGVSGTVVEVRIFSRRGVEKDQRAIAIEKQQIEKLAKDRDDELEIVEHFVFSWLEKLLVGQVIINGPKQVKAGQTITTEVLKGLSKGQFWQLTVEDANIMNEIEQIKTHYDEKKEALNKRFATKVEKLQSGDDLPQGALKVVKVFIATKHKLQPGDKMAGRHGNKGVISRIVPEEDMPFLEDGTVVDIVLNPLGLPSRMNIGQILETHLGWASINLAKKISTLVQEYQNKKIAIEQIKKFLIKLYGENINSVLERSEEEIISFCKKVSKGVHFATPVFDGAKVQDVKDMLKLADQDPSGQVKLIDGRTGEYFDRLVTVGQKYLLKLHHLVDNKIHSRSIGPYSLVTQQPLGGKSHFGGQRFGEMECWALQAYGAAYTLQEMLTVKSDDVNGRIKTYDSIVRGENNFESGIPESFNVMIKEFRSLCLNVKLEVTSS</sequence>
<feature type="chain" id="PRO_1000051979" description="DNA-directed RNA polymerase subunit beta">
    <location>
        <begin position="1"/>
        <end position="1373"/>
    </location>
</feature>
<accession>A8EXK8</accession>